<feature type="chain" id="PRO_0000376598" description="Probable cell division protein WhiA">
    <location>
        <begin position="1"/>
        <end position="303"/>
    </location>
</feature>
<feature type="DNA-binding region" description="H-T-H motif" evidence="1">
    <location>
        <begin position="272"/>
        <end position="303"/>
    </location>
</feature>
<gene>
    <name evidence="1" type="primary">whiA</name>
    <name type="ordered locus">str0833</name>
</gene>
<keyword id="KW-0131">Cell cycle</keyword>
<keyword id="KW-0132">Cell division</keyword>
<keyword id="KW-0238">DNA-binding</keyword>
<reference key="1">
    <citation type="journal article" date="2004" name="Nat. Biotechnol.">
        <title>Complete sequence and comparative genome analysis of the dairy bacterium Streptococcus thermophilus.</title>
        <authorList>
            <person name="Bolotin A."/>
            <person name="Quinquis B."/>
            <person name="Renault P."/>
            <person name="Sorokin A."/>
            <person name="Ehrlich S.D."/>
            <person name="Kulakauskas S."/>
            <person name="Lapidus A."/>
            <person name="Goltsman E."/>
            <person name="Mazur M."/>
            <person name="Pusch G.D."/>
            <person name="Fonstein M."/>
            <person name="Overbeek R."/>
            <person name="Kyprides N."/>
            <person name="Purnelle B."/>
            <person name="Prozzi D."/>
            <person name="Ngui K."/>
            <person name="Masuy D."/>
            <person name="Hancy F."/>
            <person name="Burteau S."/>
            <person name="Boutry M."/>
            <person name="Delcour J."/>
            <person name="Goffeau A."/>
            <person name="Hols P."/>
        </authorList>
    </citation>
    <scope>NUCLEOTIDE SEQUENCE [LARGE SCALE GENOMIC DNA]</scope>
    <source>
        <strain>CNRZ 1066</strain>
    </source>
</reference>
<accession>Q5M056</accession>
<comment type="function">
    <text evidence="1">Involved in cell division and chromosome segregation.</text>
</comment>
<comment type="similarity">
    <text evidence="1">Belongs to the WhiA family.</text>
</comment>
<sequence length="303" mass="34211">MSFTIKVKEEIIAASSKDIAELSALIKMSGSVGLTNQGLTLSISTENAKIARHIYQLIENRYRCNPELRHYNKTNLKKNRVYTVFVAENVNDILSDLQLADSFFGFETGIETSIMEDDDAGRSYLRGAFLATGTVRDPEKGRYQLEIFSVYQDHAEDLASLMKKFMLDAKVLQHKNGFVTYLQKAEDIMDFLIVIGAMTSKEIFEEVKIMRETRNDLNRANNAETANIARTISASMKTINNIIKIMDTVGLEILPVELRQIAQLRIANPDYSIQQIADSIEPPLTKSGVNHRLRKINKIADDL</sequence>
<evidence type="ECO:0000255" key="1">
    <source>
        <dbReference type="HAMAP-Rule" id="MF_01420"/>
    </source>
</evidence>
<protein>
    <recommendedName>
        <fullName evidence="1">Probable cell division protein WhiA</fullName>
    </recommendedName>
</protein>
<name>WHIA_STRT1</name>
<organism>
    <name type="scientific">Streptococcus thermophilus (strain CNRZ 1066)</name>
    <dbReference type="NCBI Taxonomy" id="299768"/>
    <lineage>
        <taxon>Bacteria</taxon>
        <taxon>Bacillati</taxon>
        <taxon>Bacillota</taxon>
        <taxon>Bacilli</taxon>
        <taxon>Lactobacillales</taxon>
        <taxon>Streptococcaceae</taxon>
        <taxon>Streptococcus</taxon>
    </lineage>
</organism>
<dbReference type="EMBL" id="CP000024">
    <property type="protein sequence ID" value="AAV62424.1"/>
    <property type="molecule type" value="Genomic_DNA"/>
</dbReference>
<dbReference type="RefSeq" id="WP_002945081.1">
    <property type="nucleotide sequence ID" value="NC_006449.1"/>
</dbReference>
<dbReference type="SMR" id="Q5M056"/>
<dbReference type="GeneID" id="66898719"/>
<dbReference type="KEGG" id="stc:str0833"/>
<dbReference type="HOGENOM" id="CLU_053282_0_0_9"/>
<dbReference type="GO" id="GO:0003677">
    <property type="term" value="F:DNA binding"/>
    <property type="evidence" value="ECO:0007669"/>
    <property type="project" value="UniProtKB-UniRule"/>
</dbReference>
<dbReference type="GO" id="GO:0051301">
    <property type="term" value="P:cell division"/>
    <property type="evidence" value="ECO:0007669"/>
    <property type="project" value="UniProtKB-UniRule"/>
</dbReference>
<dbReference type="GO" id="GO:0043937">
    <property type="term" value="P:regulation of sporulation"/>
    <property type="evidence" value="ECO:0007669"/>
    <property type="project" value="InterPro"/>
</dbReference>
<dbReference type="Gene3D" id="3.10.28.10">
    <property type="entry name" value="Homing endonucleases"/>
    <property type="match status" value="1"/>
</dbReference>
<dbReference type="HAMAP" id="MF_01420">
    <property type="entry name" value="HTH_type_WhiA"/>
    <property type="match status" value="1"/>
</dbReference>
<dbReference type="InterPro" id="IPR027434">
    <property type="entry name" value="Homing_endonucl"/>
</dbReference>
<dbReference type="InterPro" id="IPR018478">
    <property type="entry name" value="Sporu_reg_WhiA_N_dom"/>
</dbReference>
<dbReference type="InterPro" id="IPR003802">
    <property type="entry name" value="Sporulation_regulator_WhiA"/>
</dbReference>
<dbReference type="InterPro" id="IPR023054">
    <property type="entry name" value="Sporulation_regulator_WhiA_C"/>
</dbReference>
<dbReference type="InterPro" id="IPR039518">
    <property type="entry name" value="WhiA_LAGLIDADG_dom"/>
</dbReference>
<dbReference type="NCBIfam" id="TIGR00647">
    <property type="entry name" value="DNA_bind_WhiA"/>
    <property type="match status" value="1"/>
</dbReference>
<dbReference type="PANTHER" id="PTHR37307">
    <property type="entry name" value="CELL DIVISION PROTEIN WHIA-RELATED"/>
    <property type="match status" value="1"/>
</dbReference>
<dbReference type="PANTHER" id="PTHR37307:SF1">
    <property type="entry name" value="CELL DIVISION PROTEIN WHIA-RELATED"/>
    <property type="match status" value="1"/>
</dbReference>
<dbReference type="Pfam" id="PF02650">
    <property type="entry name" value="HTH_WhiA"/>
    <property type="match status" value="1"/>
</dbReference>
<dbReference type="Pfam" id="PF14527">
    <property type="entry name" value="LAGLIDADG_WhiA"/>
    <property type="match status" value="1"/>
</dbReference>
<dbReference type="Pfam" id="PF10298">
    <property type="entry name" value="WhiA_N"/>
    <property type="match status" value="1"/>
</dbReference>
<dbReference type="SUPFAM" id="SSF55608">
    <property type="entry name" value="Homing endonucleases"/>
    <property type="match status" value="1"/>
</dbReference>
<proteinExistence type="inferred from homology"/>